<feature type="signal peptide" evidence="1">
    <location>
        <begin position="1"/>
        <end position="26"/>
    </location>
</feature>
<feature type="chain" id="PRO_0000021272" description="Flagellar biosynthetic protein FliZ">
    <location>
        <begin position="27"/>
        <end position="219"/>
    </location>
</feature>
<feature type="transmembrane region" description="Helical" evidence="1">
    <location>
        <begin position="71"/>
        <end position="96"/>
    </location>
</feature>
<feature type="region of interest" description="Disordered" evidence="2">
    <location>
        <begin position="41"/>
        <end position="62"/>
    </location>
</feature>
<feature type="region of interest" description="Disordered" evidence="2">
    <location>
        <begin position="200"/>
        <end position="219"/>
    </location>
</feature>
<feature type="compositionally biased region" description="Basic and acidic residues" evidence="2">
    <location>
        <begin position="41"/>
        <end position="61"/>
    </location>
</feature>
<feature type="compositionally biased region" description="Basic and acidic residues" evidence="2">
    <location>
        <begin position="200"/>
        <end position="212"/>
    </location>
</feature>
<comment type="function">
    <text>May be a structural component of the flagellum that anchors the rod to the membrane.</text>
</comment>
<comment type="subcellular location">
    <subcellularLocation>
        <location evidence="3">Cell membrane</location>
        <topology evidence="3">Single-pass membrane protein</topology>
    </subcellularLocation>
</comment>
<sequence>MKKSQYFIVFICFFVLFSVHPIAAAAADSDNSTVNEWFQKKDEKTADQSEQKKEKTTKTADETEGAAAPSVSAFDFVKMIFALLFVIVLIYGLVKLMNKRNRLLKPFQYVENIGGTSVGQNRSIQLIKVGKSVLVVGVGETIQLLKEIEDEKEIEVILSQHEEAMSSKIEWQKFVKPLKSSEHQPQQKLPSFSKALKEQLEELKQNRSEGKKKGPRHHE</sequence>
<proteinExistence type="inferred from homology"/>
<dbReference type="EMBL" id="M87005">
    <property type="protein sequence ID" value="AAA22452.1"/>
    <property type="molecule type" value="Genomic_DNA"/>
</dbReference>
<dbReference type="EMBL" id="AL009126">
    <property type="protein sequence ID" value="CAB13507.1"/>
    <property type="molecule type" value="Genomic_DNA"/>
</dbReference>
<dbReference type="PIR" id="B41886">
    <property type="entry name" value="B41886"/>
</dbReference>
<dbReference type="RefSeq" id="NP_389516.1">
    <property type="nucleotide sequence ID" value="NC_000964.3"/>
</dbReference>
<dbReference type="RefSeq" id="WP_003231958.1">
    <property type="nucleotide sequence ID" value="NZ_OZ025638.1"/>
</dbReference>
<dbReference type="FunCoup" id="P35536">
    <property type="interactions" value="104"/>
</dbReference>
<dbReference type="IntAct" id="P35536">
    <property type="interactions" value="13"/>
</dbReference>
<dbReference type="STRING" id="224308.BSU16340"/>
<dbReference type="PaxDb" id="224308-BSU16340"/>
<dbReference type="EnsemblBacteria" id="CAB13507">
    <property type="protein sequence ID" value="CAB13507"/>
    <property type="gene ID" value="BSU_16340"/>
</dbReference>
<dbReference type="GeneID" id="936796"/>
<dbReference type="KEGG" id="bsu:BSU16340"/>
<dbReference type="PATRIC" id="fig|224308.179.peg.1775"/>
<dbReference type="eggNOG" id="COG3190">
    <property type="taxonomic scope" value="Bacteria"/>
</dbReference>
<dbReference type="InParanoid" id="P35536"/>
<dbReference type="OrthoDB" id="2376965at2"/>
<dbReference type="BioCyc" id="BSUB:BSU16340-MONOMER"/>
<dbReference type="Proteomes" id="UP000001570">
    <property type="component" value="Chromosome"/>
</dbReference>
<dbReference type="GO" id="GO:0005886">
    <property type="term" value="C:plasma membrane"/>
    <property type="evidence" value="ECO:0007669"/>
    <property type="project" value="UniProtKB-SubCell"/>
</dbReference>
<dbReference type="GO" id="GO:0044781">
    <property type="term" value="P:bacterial-type flagellum organization"/>
    <property type="evidence" value="ECO:0007669"/>
    <property type="project" value="UniProtKB-KW"/>
</dbReference>
<dbReference type="InterPro" id="IPR022781">
    <property type="entry name" value="Flagellar_biosynth_FliO"/>
</dbReference>
<dbReference type="NCBIfam" id="NF009951">
    <property type="entry name" value="PRK13415.1"/>
    <property type="match status" value="1"/>
</dbReference>
<dbReference type="Pfam" id="PF04347">
    <property type="entry name" value="FliO"/>
    <property type="match status" value="1"/>
</dbReference>
<organism>
    <name type="scientific">Bacillus subtilis (strain 168)</name>
    <dbReference type="NCBI Taxonomy" id="224308"/>
    <lineage>
        <taxon>Bacteria</taxon>
        <taxon>Bacillati</taxon>
        <taxon>Bacillota</taxon>
        <taxon>Bacilli</taxon>
        <taxon>Bacillales</taxon>
        <taxon>Bacillaceae</taxon>
        <taxon>Bacillus</taxon>
    </lineage>
</organism>
<reference key="1">
    <citation type="journal article" date="1992" name="J. Bacteriol.">
        <title>Nucleotide sequences of Bacillus subtilis flagellar biosynthetic genes fliP and fliQ and identification of a novel flagellar gene, fliZ.</title>
        <authorList>
            <person name="Bischoff D.S."/>
            <person name="Weinreich M.D."/>
            <person name="Ordal G.W."/>
        </authorList>
    </citation>
    <scope>NUCLEOTIDE SEQUENCE [GENOMIC DNA]</scope>
    <source>
        <strain>168 / OI1085</strain>
    </source>
</reference>
<reference key="2">
    <citation type="journal article" date="1997" name="Nature">
        <title>The complete genome sequence of the Gram-positive bacterium Bacillus subtilis.</title>
        <authorList>
            <person name="Kunst F."/>
            <person name="Ogasawara N."/>
            <person name="Moszer I."/>
            <person name="Albertini A.M."/>
            <person name="Alloni G."/>
            <person name="Azevedo V."/>
            <person name="Bertero M.G."/>
            <person name="Bessieres P."/>
            <person name="Bolotin A."/>
            <person name="Borchert S."/>
            <person name="Borriss R."/>
            <person name="Boursier L."/>
            <person name="Brans A."/>
            <person name="Braun M."/>
            <person name="Brignell S.C."/>
            <person name="Bron S."/>
            <person name="Brouillet S."/>
            <person name="Bruschi C.V."/>
            <person name="Caldwell B."/>
            <person name="Capuano V."/>
            <person name="Carter N.M."/>
            <person name="Choi S.-K."/>
            <person name="Codani J.-J."/>
            <person name="Connerton I.F."/>
            <person name="Cummings N.J."/>
            <person name="Daniel R.A."/>
            <person name="Denizot F."/>
            <person name="Devine K.M."/>
            <person name="Duesterhoeft A."/>
            <person name="Ehrlich S.D."/>
            <person name="Emmerson P.T."/>
            <person name="Entian K.-D."/>
            <person name="Errington J."/>
            <person name="Fabret C."/>
            <person name="Ferrari E."/>
            <person name="Foulger D."/>
            <person name="Fritz C."/>
            <person name="Fujita M."/>
            <person name="Fujita Y."/>
            <person name="Fuma S."/>
            <person name="Galizzi A."/>
            <person name="Galleron N."/>
            <person name="Ghim S.-Y."/>
            <person name="Glaser P."/>
            <person name="Goffeau A."/>
            <person name="Golightly E.J."/>
            <person name="Grandi G."/>
            <person name="Guiseppi G."/>
            <person name="Guy B.J."/>
            <person name="Haga K."/>
            <person name="Haiech J."/>
            <person name="Harwood C.R."/>
            <person name="Henaut A."/>
            <person name="Hilbert H."/>
            <person name="Holsappel S."/>
            <person name="Hosono S."/>
            <person name="Hullo M.-F."/>
            <person name="Itaya M."/>
            <person name="Jones L.-M."/>
            <person name="Joris B."/>
            <person name="Karamata D."/>
            <person name="Kasahara Y."/>
            <person name="Klaerr-Blanchard M."/>
            <person name="Klein C."/>
            <person name="Kobayashi Y."/>
            <person name="Koetter P."/>
            <person name="Koningstein G."/>
            <person name="Krogh S."/>
            <person name="Kumano M."/>
            <person name="Kurita K."/>
            <person name="Lapidus A."/>
            <person name="Lardinois S."/>
            <person name="Lauber J."/>
            <person name="Lazarevic V."/>
            <person name="Lee S.-M."/>
            <person name="Levine A."/>
            <person name="Liu H."/>
            <person name="Masuda S."/>
            <person name="Mauel C."/>
            <person name="Medigue C."/>
            <person name="Medina N."/>
            <person name="Mellado R.P."/>
            <person name="Mizuno M."/>
            <person name="Moestl D."/>
            <person name="Nakai S."/>
            <person name="Noback M."/>
            <person name="Noone D."/>
            <person name="O'Reilly M."/>
            <person name="Ogawa K."/>
            <person name="Ogiwara A."/>
            <person name="Oudega B."/>
            <person name="Park S.-H."/>
            <person name="Parro V."/>
            <person name="Pohl T.M."/>
            <person name="Portetelle D."/>
            <person name="Porwollik S."/>
            <person name="Prescott A.M."/>
            <person name="Presecan E."/>
            <person name="Pujic P."/>
            <person name="Purnelle B."/>
            <person name="Rapoport G."/>
            <person name="Rey M."/>
            <person name="Reynolds S."/>
            <person name="Rieger M."/>
            <person name="Rivolta C."/>
            <person name="Rocha E."/>
            <person name="Roche B."/>
            <person name="Rose M."/>
            <person name="Sadaie Y."/>
            <person name="Sato T."/>
            <person name="Scanlan E."/>
            <person name="Schleich S."/>
            <person name="Schroeter R."/>
            <person name="Scoffone F."/>
            <person name="Sekiguchi J."/>
            <person name="Sekowska A."/>
            <person name="Seror S.J."/>
            <person name="Serror P."/>
            <person name="Shin B.-S."/>
            <person name="Soldo B."/>
            <person name="Sorokin A."/>
            <person name="Tacconi E."/>
            <person name="Takagi T."/>
            <person name="Takahashi H."/>
            <person name="Takemaru K."/>
            <person name="Takeuchi M."/>
            <person name="Tamakoshi A."/>
            <person name="Tanaka T."/>
            <person name="Terpstra P."/>
            <person name="Tognoni A."/>
            <person name="Tosato V."/>
            <person name="Uchiyama S."/>
            <person name="Vandenbol M."/>
            <person name="Vannier F."/>
            <person name="Vassarotti A."/>
            <person name="Viari A."/>
            <person name="Wambutt R."/>
            <person name="Wedler E."/>
            <person name="Wedler H."/>
            <person name="Weitzenegger T."/>
            <person name="Winters P."/>
            <person name="Wipat A."/>
            <person name="Yamamoto H."/>
            <person name="Yamane K."/>
            <person name="Yasumoto K."/>
            <person name="Yata K."/>
            <person name="Yoshida K."/>
            <person name="Yoshikawa H.-F."/>
            <person name="Zumstein E."/>
            <person name="Yoshikawa H."/>
            <person name="Danchin A."/>
        </authorList>
    </citation>
    <scope>NUCLEOTIDE SEQUENCE [LARGE SCALE GENOMIC DNA]</scope>
    <source>
        <strain>168</strain>
    </source>
</reference>
<name>FLIZ_BACSU</name>
<accession>P35536</accession>
<keyword id="KW-1005">Bacterial flagellum biogenesis</keyword>
<keyword id="KW-1003">Cell membrane</keyword>
<keyword id="KW-0472">Membrane</keyword>
<keyword id="KW-1185">Reference proteome</keyword>
<keyword id="KW-0732">Signal</keyword>
<keyword id="KW-0812">Transmembrane</keyword>
<keyword id="KW-1133">Transmembrane helix</keyword>
<evidence type="ECO:0000255" key="1"/>
<evidence type="ECO:0000256" key="2">
    <source>
        <dbReference type="SAM" id="MobiDB-lite"/>
    </source>
</evidence>
<evidence type="ECO:0000305" key="3"/>
<gene>
    <name type="primary">fliZ</name>
    <name type="synonym">cheA</name>
    <name type="ordered locus">BSU16340</name>
</gene>
<protein>
    <recommendedName>
        <fullName>Flagellar biosynthetic protein FliZ</fullName>
    </recommendedName>
</protein>